<keyword id="KW-0112">Calmodulin-binding</keyword>
<keyword id="KW-0114">cAMP</keyword>
<keyword id="KW-0116">cAMP-binding</keyword>
<keyword id="KW-1003">Cell membrane</keyword>
<keyword id="KW-0140">cGMP</keyword>
<keyword id="KW-0142">cGMP-binding</keyword>
<keyword id="KW-0407">Ion channel</keyword>
<keyword id="KW-0406">Ion transport</keyword>
<keyword id="KW-1071">Ligand-gated ion channel</keyword>
<keyword id="KW-0472">Membrane</keyword>
<keyword id="KW-0547">Nucleotide-binding</keyword>
<keyword id="KW-1185">Reference proteome</keyword>
<keyword id="KW-0812">Transmembrane</keyword>
<keyword id="KW-1133">Transmembrane helix</keyword>
<keyword id="KW-0813">Transport</keyword>
<gene>
    <name type="primary">CNGC11</name>
    <name type="ordered locus">At2g46440</name>
    <name type="ORF">F11C10.13</name>
</gene>
<reference key="1">
    <citation type="journal article" date="1999" name="Nature">
        <title>Sequence and analysis of chromosome 2 of the plant Arabidopsis thaliana.</title>
        <authorList>
            <person name="Lin X."/>
            <person name="Kaul S."/>
            <person name="Rounsley S.D."/>
            <person name="Shea T.P."/>
            <person name="Benito M.-I."/>
            <person name="Town C.D."/>
            <person name="Fujii C.Y."/>
            <person name="Mason T.M."/>
            <person name="Bowman C.L."/>
            <person name="Barnstead M.E."/>
            <person name="Feldblyum T.V."/>
            <person name="Buell C.R."/>
            <person name="Ketchum K.A."/>
            <person name="Lee J.J."/>
            <person name="Ronning C.M."/>
            <person name="Koo H.L."/>
            <person name="Moffat K.S."/>
            <person name="Cronin L.A."/>
            <person name="Shen M."/>
            <person name="Pai G."/>
            <person name="Van Aken S."/>
            <person name="Umayam L."/>
            <person name="Tallon L.J."/>
            <person name="Gill J.E."/>
            <person name="Adams M.D."/>
            <person name="Carrera A.J."/>
            <person name="Creasy T.H."/>
            <person name="Goodman H.M."/>
            <person name="Somerville C.R."/>
            <person name="Copenhaver G.P."/>
            <person name="Preuss D."/>
            <person name="Nierman W.C."/>
            <person name="White O."/>
            <person name="Eisen J.A."/>
            <person name="Salzberg S.L."/>
            <person name="Fraser C.M."/>
            <person name="Venter J.C."/>
        </authorList>
    </citation>
    <scope>NUCLEOTIDE SEQUENCE [LARGE SCALE GENOMIC DNA]</scope>
    <source>
        <strain>cv. Columbia</strain>
    </source>
</reference>
<reference key="2">
    <citation type="journal article" date="2017" name="Plant J.">
        <title>Araport11: a complete reannotation of the Arabidopsis thaliana reference genome.</title>
        <authorList>
            <person name="Cheng C.Y."/>
            <person name="Krishnakumar V."/>
            <person name="Chan A.P."/>
            <person name="Thibaud-Nissen F."/>
            <person name="Schobel S."/>
            <person name="Town C.D."/>
        </authorList>
    </citation>
    <scope>GENOME REANNOTATION</scope>
    <source>
        <strain>cv. Columbia</strain>
    </source>
</reference>
<reference key="3">
    <citation type="submission" date="2004-09" db="EMBL/GenBank/DDBJ databases">
        <title>Large-scale analysis of RIKEN Arabidopsis full-length (RAFL) cDNAs.</title>
        <authorList>
            <person name="Totoki Y."/>
            <person name="Seki M."/>
            <person name="Ishida J."/>
            <person name="Nakajima M."/>
            <person name="Enju A."/>
            <person name="Kamiya A."/>
            <person name="Narusaka M."/>
            <person name="Shin-i T."/>
            <person name="Nakagawa M."/>
            <person name="Sakamoto N."/>
            <person name="Oishi K."/>
            <person name="Kohara Y."/>
            <person name="Kobayashi M."/>
            <person name="Toyoda A."/>
            <person name="Sakaki Y."/>
            <person name="Sakurai T."/>
            <person name="Iida K."/>
            <person name="Akiyama K."/>
            <person name="Satou M."/>
            <person name="Toyoda T."/>
            <person name="Konagaya A."/>
            <person name="Carninci P."/>
            <person name="Kawai J."/>
            <person name="Hayashizaki Y."/>
            <person name="Shinozaki K."/>
        </authorList>
    </citation>
    <scope>NUCLEOTIDE SEQUENCE [LARGE SCALE MRNA]</scope>
    <source>
        <strain>cv. Columbia</strain>
    </source>
</reference>
<reference key="4">
    <citation type="journal article" date="2001" name="Plant Physiol.">
        <title>Phylogenetic relationships within cation transporter families of Arabidopsis.</title>
        <authorList>
            <person name="Maeser P."/>
            <person name="Thomine S."/>
            <person name="Schroeder J.I."/>
            <person name="Ward J.M."/>
            <person name="Hirschi K."/>
            <person name="Sze H."/>
            <person name="Talke I.N."/>
            <person name="Amtmann A."/>
            <person name="Maathuis F.J.M."/>
            <person name="Sanders D."/>
            <person name="Harper J.F."/>
            <person name="Tchieu J."/>
            <person name="Gribskov M."/>
            <person name="Persans M.W."/>
            <person name="Salt D.E."/>
            <person name="Kim S.A."/>
            <person name="Guerinot M.L."/>
        </authorList>
    </citation>
    <scope>GENE FAMILY</scope>
    <scope>NOMENCLATURE</scope>
</reference>
<protein>
    <recommendedName>
        <fullName>Cyclic nucleotide-gated ion channel 11</fullName>
    </recommendedName>
    <alternativeName>
        <fullName>Cyclic nucleotide- and calmodulin-regulated ion channel 11</fullName>
    </alternativeName>
</protein>
<comment type="function">
    <text>Putative cyclic nucleotide-gated ion channel.</text>
</comment>
<comment type="subunit">
    <text evidence="3">Homotetramer or heterotetramer.</text>
</comment>
<comment type="subcellular location">
    <subcellularLocation>
        <location evidence="3">Cell membrane</location>
        <topology evidence="3">Multi-pass membrane protein</topology>
    </subcellularLocation>
</comment>
<comment type="domain">
    <text evidence="1">The binding of calmodulin to the C-terminus might interfere with cyclic nucleotide binding and thus channel activation.</text>
</comment>
<comment type="similarity">
    <text evidence="3">Belongs to the cyclic nucleotide-gated cation channel (TC 1.A.1.5) family.</text>
</comment>
<comment type="sequence caution" evidence="3">
    <conflict type="erroneous gene model prediction">
        <sequence resource="EMBL-CDS" id="AAD23057"/>
    </conflict>
</comment>
<dbReference type="EMBL" id="AC006526">
    <property type="protein sequence ID" value="AAD23057.1"/>
    <property type="status" value="ALT_SEQ"/>
    <property type="molecule type" value="Genomic_DNA"/>
</dbReference>
<dbReference type="EMBL" id="CP002685">
    <property type="protein sequence ID" value="AEC10696.1"/>
    <property type="molecule type" value="Genomic_DNA"/>
</dbReference>
<dbReference type="EMBL" id="AK175287">
    <property type="protein sequence ID" value="BAD43050.1"/>
    <property type="molecule type" value="mRNA"/>
</dbReference>
<dbReference type="PIR" id="H84902">
    <property type="entry name" value="H84902"/>
</dbReference>
<dbReference type="RefSeq" id="NP_182167.2">
    <property type="nucleotide sequence ID" value="NM_130208.4"/>
</dbReference>
<dbReference type="SMR" id="Q9SKD6"/>
<dbReference type="BioGRID" id="4587">
    <property type="interactions" value="1"/>
</dbReference>
<dbReference type="FunCoup" id="Q9SKD6">
    <property type="interactions" value="207"/>
</dbReference>
<dbReference type="STRING" id="3702.Q9SKD6"/>
<dbReference type="iPTMnet" id="Q9SKD6"/>
<dbReference type="PaxDb" id="3702-AT2G46440.1"/>
<dbReference type="ProteomicsDB" id="220393"/>
<dbReference type="EnsemblPlants" id="AT2G46440.1">
    <property type="protein sequence ID" value="AT2G46440.1"/>
    <property type="gene ID" value="AT2G46440"/>
</dbReference>
<dbReference type="GeneID" id="819252"/>
<dbReference type="Gramene" id="AT2G46440.1">
    <property type="protein sequence ID" value="AT2G46440.1"/>
    <property type="gene ID" value="AT2G46440"/>
</dbReference>
<dbReference type="KEGG" id="ath:AT2G46440"/>
<dbReference type="Araport" id="AT2G46440"/>
<dbReference type="TAIR" id="AT2G46440">
    <property type="gene designation" value="CNGC11"/>
</dbReference>
<dbReference type="eggNOG" id="KOG0498">
    <property type="taxonomic scope" value="Eukaryota"/>
</dbReference>
<dbReference type="HOGENOM" id="CLU_013069_3_0_1"/>
<dbReference type="InParanoid" id="Q9SKD6"/>
<dbReference type="OMA" id="CWHEACA"/>
<dbReference type="OrthoDB" id="421226at2759"/>
<dbReference type="PhylomeDB" id="Q9SKD6"/>
<dbReference type="PRO" id="PR:Q9SKD6"/>
<dbReference type="Proteomes" id="UP000006548">
    <property type="component" value="Chromosome 2"/>
</dbReference>
<dbReference type="ExpressionAtlas" id="Q9SKD6">
    <property type="expression patterns" value="baseline and differential"/>
</dbReference>
<dbReference type="GO" id="GO:0005886">
    <property type="term" value="C:plasma membrane"/>
    <property type="evidence" value="ECO:0007669"/>
    <property type="project" value="UniProtKB-SubCell"/>
</dbReference>
<dbReference type="GO" id="GO:0005516">
    <property type="term" value="F:calmodulin binding"/>
    <property type="evidence" value="ECO:0007669"/>
    <property type="project" value="UniProtKB-KW"/>
</dbReference>
<dbReference type="GO" id="GO:0030552">
    <property type="term" value="F:cAMP binding"/>
    <property type="evidence" value="ECO:0007669"/>
    <property type="project" value="UniProtKB-KW"/>
</dbReference>
<dbReference type="GO" id="GO:0030553">
    <property type="term" value="F:cGMP binding"/>
    <property type="evidence" value="ECO:0007669"/>
    <property type="project" value="UniProtKB-KW"/>
</dbReference>
<dbReference type="GO" id="GO:0005216">
    <property type="term" value="F:monoatomic ion channel activity"/>
    <property type="evidence" value="ECO:0007669"/>
    <property type="project" value="InterPro"/>
</dbReference>
<dbReference type="GO" id="GO:0006952">
    <property type="term" value="P:defense response"/>
    <property type="evidence" value="ECO:0000316"/>
    <property type="project" value="TAIR"/>
</dbReference>
<dbReference type="GO" id="GO:0009617">
    <property type="term" value="P:response to bacterium"/>
    <property type="evidence" value="ECO:0000316"/>
    <property type="project" value="TAIR"/>
</dbReference>
<dbReference type="GO" id="GO:0009620">
    <property type="term" value="P:response to fungus"/>
    <property type="evidence" value="ECO:0000315"/>
    <property type="project" value="TAIR"/>
</dbReference>
<dbReference type="CDD" id="cd00038">
    <property type="entry name" value="CAP_ED"/>
    <property type="match status" value="1"/>
</dbReference>
<dbReference type="Gene3D" id="1.10.287.70">
    <property type="match status" value="1"/>
</dbReference>
<dbReference type="Gene3D" id="1.10.287.630">
    <property type="entry name" value="Helix hairpin bin"/>
    <property type="match status" value="1"/>
</dbReference>
<dbReference type="Gene3D" id="2.60.120.10">
    <property type="entry name" value="Jelly Rolls"/>
    <property type="match status" value="1"/>
</dbReference>
<dbReference type="InterPro" id="IPR000595">
    <property type="entry name" value="cNMP-bd_dom"/>
</dbReference>
<dbReference type="InterPro" id="IPR018490">
    <property type="entry name" value="cNMP-bd_dom_sf"/>
</dbReference>
<dbReference type="InterPro" id="IPR005821">
    <property type="entry name" value="Ion_trans_dom"/>
</dbReference>
<dbReference type="InterPro" id="IPR014710">
    <property type="entry name" value="RmlC-like_jellyroll"/>
</dbReference>
<dbReference type="PANTHER" id="PTHR45651:SF37">
    <property type="entry name" value="CYCLIC NUCLEOTIDE-GATED ION CHANNEL 11"/>
    <property type="match status" value="1"/>
</dbReference>
<dbReference type="PANTHER" id="PTHR45651">
    <property type="entry name" value="CYCLIC NUCLEOTIDE-GATED ION CHANNEL 15-RELATED-RELATED"/>
    <property type="match status" value="1"/>
</dbReference>
<dbReference type="Pfam" id="PF00520">
    <property type="entry name" value="Ion_trans"/>
    <property type="match status" value="1"/>
</dbReference>
<dbReference type="SMART" id="SM00100">
    <property type="entry name" value="cNMP"/>
    <property type="match status" value="1"/>
</dbReference>
<dbReference type="SUPFAM" id="SSF51206">
    <property type="entry name" value="cAMP-binding domain-like"/>
    <property type="match status" value="1"/>
</dbReference>
<dbReference type="SUPFAM" id="SSF81324">
    <property type="entry name" value="Voltage-gated potassium channels"/>
    <property type="match status" value="1"/>
</dbReference>
<dbReference type="PROSITE" id="PS50042">
    <property type="entry name" value="CNMP_BINDING_3"/>
    <property type="match status" value="1"/>
</dbReference>
<name>CNG11_ARATH</name>
<organism>
    <name type="scientific">Arabidopsis thaliana</name>
    <name type="common">Mouse-ear cress</name>
    <dbReference type="NCBI Taxonomy" id="3702"/>
    <lineage>
        <taxon>Eukaryota</taxon>
        <taxon>Viridiplantae</taxon>
        <taxon>Streptophyta</taxon>
        <taxon>Embryophyta</taxon>
        <taxon>Tracheophyta</taxon>
        <taxon>Spermatophyta</taxon>
        <taxon>Magnoliopsida</taxon>
        <taxon>eudicotyledons</taxon>
        <taxon>Gunneridae</taxon>
        <taxon>Pentapetalae</taxon>
        <taxon>rosids</taxon>
        <taxon>malvids</taxon>
        <taxon>Brassicales</taxon>
        <taxon>Brassicaceae</taxon>
        <taxon>Camelineae</taxon>
        <taxon>Arabidopsis</taxon>
    </lineage>
</organism>
<proteinExistence type="evidence at transcript level"/>
<accession>Q9SKD6</accession>
<accession>Q682T0</accession>
<sequence>MNLQRRKFVRLDSTGVDGKLKSVRGRLKKVYGKMKTLENWRKTVLLACVVALAIDPLFLFIPLIDSQRFCFTFDKTLVAVVCVIRTFIDTFYVIHIIYYLITETIAPRSQASLRGEIVVHSKATLKTRLLFHFIVDIISVLPIPQVVVLTLIPLSASLVSERILKWIILSQYVPRIIRMYPLYKEVTRAFGTVAESKRVGAALNFFLYMLHSYVCGAFWYLSSIERKSTCWRAACARTSDCNLTVTDLLCKRAGSDNIRFLNTSCPLIDPAQITNSTDFDFGMYIDALKSGVLEVKPKDFPRKFVYCFWWGLRNISALGQNLETSNSAGEIFFAIIICVSGLLLFAVLIGNVQKYLQSSTTRVDEMEEKKRDTEKWMSYREIPEYLKERIRRFEDYKWRRTKGTEEEALLRSLPKDLRLETKRYLFLKLLKKVPLLQAMDDQLLDALCARLKTVHYTEKSYIVREGEPVEDMLFIMRGNLISTTTYGGRTGFFNSVDLIAGDSCGDLLTWALYSLSSQFPISSRTVQALTEVEGFVISADDLKFVATQYRRLHSKQLQHMFRFYSLQWQTWAACFIQAAWKRHCRRKLSKALREEEGKLHNTLQNDDSGGNKLNLGAAIYA</sequence>
<evidence type="ECO:0000250" key="1"/>
<evidence type="ECO:0000255" key="2"/>
<evidence type="ECO:0000305" key="3"/>
<feature type="chain" id="PRO_0000219339" description="Cyclic nucleotide-gated ion channel 11">
    <location>
        <begin position="1"/>
        <end position="621"/>
    </location>
</feature>
<feature type="topological domain" description="Cytoplasmic" evidence="2">
    <location>
        <begin position="1"/>
        <end position="43"/>
    </location>
</feature>
<feature type="transmembrane region" description="Helical; Name=H1" evidence="2">
    <location>
        <begin position="44"/>
        <end position="64"/>
    </location>
</feature>
<feature type="topological domain" description="Extracellular" evidence="2">
    <location>
        <begin position="65"/>
        <end position="76"/>
    </location>
</feature>
<feature type="transmembrane region" description="Helical; Name=H2" evidence="2">
    <location>
        <begin position="77"/>
        <end position="97"/>
    </location>
</feature>
<feature type="topological domain" description="Cytoplasmic" evidence="2">
    <location>
        <begin position="98"/>
        <end position="128"/>
    </location>
</feature>
<feature type="transmembrane region" description="Helical; Name=H3" evidence="2">
    <location>
        <begin position="129"/>
        <end position="149"/>
    </location>
</feature>
<feature type="topological domain" description="Extracellular" evidence="2">
    <location>
        <begin position="150"/>
        <end position="162"/>
    </location>
</feature>
<feature type="transmembrane region" description="Helical; Name=H4" evidence="2">
    <location>
        <begin position="163"/>
        <end position="183"/>
    </location>
</feature>
<feature type="topological domain" description="Cytoplasmic" evidence="2">
    <location>
        <begin position="184"/>
        <end position="198"/>
    </location>
</feature>
<feature type="transmembrane region" description="Helical; Name=H5" evidence="2">
    <location>
        <begin position="199"/>
        <end position="219"/>
    </location>
</feature>
<feature type="topological domain" description="Extracellular" evidence="2">
    <location>
        <begin position="220"/>
        <end position="329"/>
    </location>
</feature>
<feature type="transmembrane region" description="Helical; Name=H6" evidence="2">
    <location>
        <begin position="330"/>
        <end position="350"/>
    </location>
</feature>
<feature type="topological domain" description="Cytoplasmic" evidence="2">
    <location>
        <begin position="351"/>
        <end position="621"/>
    </location>
</feature>
<feature type="domain" description="IQ">
    <location>
        <begin position="569"/>
        <end position="598"/>
    </location>
</feature>
<feature type="region of interest" description="Calmodulin-binding" evidence="1">
    <location>
        <begin position="549"/>
        <end position="564"/>
    </location>
</feature>
<feature type="binding site">
    <location>
        <begin position="435"/>
        <end position="556"/>
    </location>
    <ligand>
        <name>a nucleoside 3',5'-cyclic phosphate</name>
        <dbReference type="ChEBI" id="CHEBI:58464"/>
    </ligand>
</feature>
<feature type="binding site" evidence="1">
    <location>
        <position position="506"/>
    </location>
    <ligand>
        <name>a nucleoside 3',5'-cyclic phosphate</name>
        <dbReference type="ChEBI" id="CHEBI:58464"/>
    </ligand>
</feature>